<dbReference type="EC" id="2.1.1.166" evidence="1"/>
<dbReference type="EMBL" id="CP000409">
    <property type="protein sequence ID" value="ABV73114.1"/>
    <property type="molecule type" value="Genomic_DNA"/>
</dbReference>
<dbReference type="RefSeq" id="WP_012148315.1">
    <property type="nucleotide sequence ID" value="NC_009879.1"/>
</dbReference>
<dbReference type="SMR" id="A8EXN1"/>
<dbReference type="STRING" id="293613.A1E_00830"/>
<dbReference type="KEGG" id="rcm:A1E_00830"/>
<dbReference type="eggNOG" id="COG0293">
    <property type="taxonomic scope" value="Bacteria"/>
</dbReference>
<dbReference type="HOGENOM" id="CLU_009422_4_0_5"/>
<dbReference type="Proteomes" id="UP000007056">
    <property type="component" value="Chromosome"/>
</dbReference>
<dbReference type="GO" id="GO:0005737">
    <property type="term" value="C:cytoplasm"/>
    <property type="evidence" value="ECO:0007669"/>
    <property type="project" value="UniProtKB-SubCell"/>
</dbReference>
<dbReference type="GO" id="GO:0008650">
    <property type="term" value="F:rRNA (uridine-2'-O-)-methyltransferase activity"/>
    <property type="evidence" value="ECO:0007669"/>
    <property type="project" value="UniProtKB-UniRule"/>
</dbReference>
<dbReference type="Gene3D" id="3.40.50.150">
    <property type="entry name" value="Vaccinia Virus protein VP39"/>
    <property type="match status" value="1"/>
</dbReference>
<dbReference type="HAMAP" id="MF_01547">
    <property type="entry name" value="RNA_methyltr_E"/>
    <property type="match status" value="1"/>
</dbReference>
<dbReference type="InterPro" id="IPR050082">
    <property type="entry name" value="RNA_methyltr_RlmE"/>
</dbReference>
<dbReference type="InterPro" id="IPR002877">
    <property type="entry name" value="RNA_MeTrfase_FtsJ_dom"/>
</dbReference>
<dbReference type="InterPro" id="IPR015507">
    <property type="entry name" value="rRNA-MeTfrase_E"/>
</dbReference>
<dbReference type="InterPro" id="IPR029063">
    <property type="entry name" value="SAM-dependent_MTases_sf"/>
</dbReference>
<dbReference type="PANTHER" id="PTHR10920">
    <property type="entry name" value="RIBOSOMAL RNA METHYLTRANSFERASE"/>
    <property type="match status" value="1"/>
</dbReference>
<dbReference type="PANTHER" id="PTHR10920:SF18">
    <property type="entry name" value="RRNA METHYLTRANSFERASE 2, MITOCHONDRIAL"/>
    <property type="match status" value="1"/>
</dbReference>
<dbReference type="Pfam" id="PF01728">
    <property type="entry name" value="FtsJ"/>
    <property type="match status" value="1"/>
</dbReference>
<dbReference type="PIRSF" id="PIRSF005461">
    <property type="entry name" value="23S_rRNA_mtase"/>
    <property type="match status" value="1"/>
</dbReference>
<dbReference type="SUPFAM" id="SSF53335">
    <property type="entry name" value="S-adenosyl-L-methionine-dependent methyltransferases"/>
    <property type="match status" value="1"/>
</dbReference>
<gene>
    <name evidence="1" type="primary">rlmE</name>
    <name evidence="1" type="synonym">ftsJ</name>
    <name evidence="1" type="synonym">rrmJ</name>
    <name type="ordered locus">A1E_00830</name>
</gene>
<name>RLME_RICCK</name>
<protein>
    <recommendedName>
        <fullName evidence="1">Ribosomal RNA large subunit methyltransferase E</fullName>
        <ecNumber evidence="1">2.1.1.166</ecNumber>
    </recommendedName>
    <alternativeName>
        <fullName evidence="1">23S rRNA Um2552 methyltransferase</fullName>
    </alternativeName>
    <alternativeName>
        <fullName evidence="1">rRNA (uridine-2'-O-)-methyltransferase</fullName>
    </alternativeName>
</protein>
<organism>
    <name type="scientific">Rickettsia canadensis (strain McKiel)</name>
    <dbReference type="NCBI Taxonomy" id="293613"/>
    <lineage>
        <taxon>Bacteria</taxon>
        <taxon>Pseudomonadati</taxon>
        <taxon>Pseudomonadota</taxon>
        <taxon>Alphaproteobacteria</taxon>
        <taxon>Rickettsiales</taxon>
        <taxon>Rickettsiaceae</taxon>
        <taxon>Rickettsieae</taxon>
        <taxon>Rickettsia</taxon>
        <taxon>belli group</taxon>
    </lineage>
</organism>
<feature type="chain" id="PRO_1000087706" description="Ribosomal RNA large subunit methyltransferase E">
    <location>
        <begin position="1"/>
        <end position="227"/>
    </location>
</feature>
<feature type="active site" description="Proton acceptor" evidence="1">
    <location>
        <position position="183"/>
    </location>
</feature>
<feature type="binding site" evidence="1">
    <location>
        <position position="78"/>
    </location>
    <ligand>
        <name>S-adenosyl-L-methionine</name>
        <dbReference type="ChEBI" id="CHEBI:59789"/>
    </ligand>
</feature>
<feature type="binding site" evidence="1">
    <location>
        <position position="80"/>
    </location>
    <ligand>
        <name>S-adenosyl-L-methionine</name>
        <dbReference type="ChEBI" id="CHEBI:59789"/>
    </ligand>
</feature>
<feature type="binding site" evidence="1">
    <location>
        <position position="103"/>
    </location>
    <ligand>
        <name>S-adenosyl-L-methionine</name>
        <dbReference type="ChEBI" id="CHEBI:59789"/>
    </ligand>
</feature>
<feature type="binding site" evidence="1">
    <location>
        <position position="119"/>
    </location>
    <ligand>
        <name>S-adenosyl-L-methionine</name>
        <dbReference type="ChEBI" id="CHEBI:59789"/>
    </ligand>
</feature>
<feature type="binding site" evidence="1">
    <location>
        <position position="143"/>
    </location>
    <ligand>
        <name>S-adenosyl-L-methionine</name>
        <dbReference type="ChEBI" id="CHEBI:59789"/>
    </ligand>
</feature>
<reference key="1">
    <citation type="submission" date="2007-09" db="EMBL/GenBank/DDBJ databases">
        <title>Complete genome sequence of Rickettsia canadensis.</title>
        <authorList>
            <person name="Madan A."/>
            <person name="Fahey J."/>
            <person name="Helton E."/>
            <person name="Ketteman M."/>
            <person name="Madan A."/>
            <person name="Rodrigues S."/>
            <person name="Sanchez A."/>
            <person name="Whiting M."/>
            <person name="Dasch G."/>
            <person name="Eremeeva M."/>
        </authorList>
    </citation>
    <scope>NUCLEOTIDE SEQUENCE [LARGE SCALE GENOMIC DNA]</scope>
    <source>
        <strain>McKiel</strain>
    </source>
</reference>
<comment type="function">
    <text evidence="1">Specifically methylates the uridine in position 2552 of 23S rRNA at the 2'-O position of the ribose in the fully assembled 50S ribosomal subunit.</text>
</comment>
<comment type="catalytic activity">
    <reaction evidence="1">
        <text>uridine(2552) in 23S rRNA + S-adenosyl-L-methionine = 2'-O-methyluridine(2552) in 23S rRNA + S-adenosyl-L-homocysteine + H(+)</text>
        <dbReference type="Rhea" id="RHEA:42720"/>
        <dbReference type="Rhea" id="RHEA-COMP:10202"/>
        <dbReference type="Rhea" id="RHEA-COMP:10203"/>
        <dbReference type="ChEBI" id="CHEBI:15378"/>
        <dbReference type="ChEBI" id="CHEBI:57856"/>
        <dbReference type="ChEBI" id="CHEBI:59789"/>
        <dbReference type="ChEBI" id="CHEBI:65315"/>
        <dbReference type="ChEBI" id="CHEBI:74478"/>
        <dbReference type="EC" id="2.1.1.166"/>
    </reaction>
</comment>
<comment type="subcellular location">
    <subcellularLocation>
        <location evidence="1">Cytoplasm</location>
    </subcellularLocation>
</comment>
<comment type="similarity">
    <text evidence="1">Belongs to the class I-like SAM-binding methyltransferase superfamily. RNA methyltransferase RlmE family.</text>
</comment>
<evidence type="ECO:0000255" key="1">
    <source>
        <dbReference type="HAMAP-Rule" id="MF_01547"/>
    </source>
</evidence>
<sequence>MTNNLSGYRNKFVRVKTSRKRTVSSNNWLRRQLNDPYVAKARTQGFRSRAAYKLLEIHEKFKLFTPNMKIVDLGAAPGGWSQIASKLIKASDNSLNNKIISIDLLEIRPIVGVEFFQKDFFEEDTEKLIIQALDGKANIVMSDMASNTIGHKATDHIRTLLLCEQALEFALKVLKPSGHFIAKIFRGGAENKLLNKVKHEFRTVKHFKPLSSRSESTEIYLVALNKK</sequence>
<keyword id="KW-0963">Cytoplasm</keyword>
<keyword id="KW-0489">Methyltransferase</keyword>
<keyword id="KW-0698">rRNA processing</keyword>
<keyword id="KW-0949">S-adenosyl-L-methionine</keyword>
<keyword id="KW-0808">Transferase</keyword>
<accession>A8EXN1</accession>
<proteinExistence type="inferred from homology"/>